<accession>P94202</accession>
<dbReference type="EMBL" id="X98863">
    <property type="protein sequence ID" value="CAA67370.1"/>
    <property type="molecule type" value="Genomic_DNA"/>
</dbReference>
<dbReference type="SMR" id="P94202"/>
<dbReference type="UniPathway" id="UPA00286"/>
<dbReference type="GO" id="GO:0009279">
    <property type="term" value="C:cell outer membrane"/>
    <property type="evidence" value="ECO:0007669"/>
    <property type="project" value="UniProtKB-SubCell"/>
</dbReference>
<dbReference type="GO" id="GO:0042121">
    <property type="term" value="P:alginic acid biosynthetic process"/>
    <property type="evidence" value="ECO:0007669"/>
    <property type="project" value="UniProtKB-UniPathway"/>
</dbReference>
<dbReference type="Gene3D" id="1.25.40.10">
    <property type="entry name" value="Tetratricopeptide repeat domain"/>
    <property type="match status" value="1"/>
</dbReference>
<dbReference type="InterPro" id="IPR006597">
    <property type="entry name" value="Sel1-like"/>
</dbReference>
<dbReference type="InterPro" id="IPR050767">
    <property type="entry name" value="Sel1_AlgK"/>
</dbReference>
<dbReference type="InterPro" id="IPR011990">
    <property type="entry name" value="TPR-like_helical_dom_sf"/>
</dbReference>
<dbReference type="PANTHER" id="PTHR11102:SF160">
    <property type="entry name" value="ERAD-ASSOCIATED E3 UBIQUITIN-PROTEIN LIGASE COMPONENT HRD3"/>
    <property type="match status" value="1"/>
</dbReference>
<dbReference type="PANTHER" id="PTHR11102">
    <property type="entry name" value="SEL-1-LIKE PROTEIN"/>
    <property type="match status" value="1"/>
</dbReference>
<dbReference type="SMART" id="SM00671">
    <property type="entry name" value="SEL1"/>
    <property type="match status" value="4"/>
</dbReference>
<dbReference type="SUPFAM" id="SSF81901">
    <property type="entry name" value="HCP-like"/>
    <property type="match status" value="2"/>
</dbReference>
<dbReference type="PROSITE" id="PS51257">
    <property type="entry name" value="PROKAR_LIPOPROTEIN"/>
    <property type="match status" value="1"/>
</dbReference>
<reference key="1">
    <citation type="journal article" date="1997" name="FEMS Microbiol. Lett.">
        <title>Isolation and characterization of an Azotobacter vinelandii algK mutant.</title>
        <authorList>
            <person name="Mejia-Ruiz H."/>
            <person name="Moreno S."/>
            <person name="Guzman J."/>
            <person name="Najera R."/>
            <person name="Leon R."/>
            <person name="Soberon-Chavez G."/>
            <person name="Espin G."/>
        </authorList>
    </citation>
    <scope>NUCLEOTIDE SEQUENCE [GENOMIC DNA]</scope>
    <scope>DISRUPTION PHENOTYPE</scope>
    <source>
        <strain>ATCC 9046</strain>
    </source>
</reference>
<proteinExistence type="inferred from homology"/>
<protein>
    <recommendedName>
        <fullName>Alginate biosynthesis protein AlgK</fullName>
    </recommendedName>
</protein>
<keyword id="KW-0016">Alginate biosynthesis</keyword>
<keyword id="KW-0998">Cell outer membrane</keyword>
<keyword id="KW-0449">Lipoprotein</keyword>
<keyword id="KW-0472">Membrane</keyword>
<keyword id="KW-0564">Palmitate</keyword>
<keyword id="KW-0732">Signal</keyword>
<sequence length="460" mass="50987">MNLTKPLLLSALAGLTACANLDLPDQRLAKEALQRGDTQTAERHFRQLADMGFTEAQLGLADMQLASGDPEQLRKAEQTYRMALDASPRAKARLGKLLAYKPTSSEAEKREAAQLLSDAFAAGEDGVLLPLAMLYLKNPQTFPDVSLQQRIDQWRAAGHPQADIAQIVVYRTQGTYDQHLDDIERICQQRLAEHSDCYVELATVYLQARPEWTRTTACRAWCNSSWPLMAAHRAGGVSAQLVTEVAGVLSNPLLGQSNEKTAQTMLEEIAPPPGSVWRVLIYDFPGTGDTDQMLDYLAWPCAAQPAADLLLGRLYYEGKLLPQDPFKAEEYFIKARATENSAHYYLGQIYRRGFLGEVYPQKAVDSLLTAARGGQASADYALAQLYSQGRGIRIDLANAYVFARLAVLQGRPDSEPLLQEIKANLAPAERTRGEQMLHAEQQARYGVWQTSTQLQAMQNQ</sequence>
<organism>
    <name type="scientific">Azotobacter vinelandii</name>
    <dbReference type="NCBI Taxonomy" id="354"/>
    <lineage>
        <taxon>Bacteria</taxon>
        <taxon>Pseudomonadati</taxon>
        <taxon>Pseudomonadota</taxon>
        <taxon>Gammaproteobacteria</taxon>
        <taxon>Pseudomonadales</taxon>
        <taxon>Pseudomonadaceae</taxon>
        <taxon>Azotobacter</taxon>
    </lineage>
</organism>
<comment type="function">
    <text>May be involved in the polymerization of mannuronate to alginate.</text>
</comment>
<comment type="pathway">
    <text>Glycan biosynthesis; alginate biosynthesis.</text>
</comment>
<comment type="subcellular location">
    <subcellularLocation>
        <location evidence="1">Cell outer membrane</location>
        <topology evidence="2">Lipid-anchor</topology>
        <orientation evidence="1">Periplasmic side</orientation>
    </subcellularLocation>
</comment>
<comment type="disruption phenotype">
    <text evidence="3">Cells do not encyst.</text>
</comment>
<comment type="similarity">
    <text evidence="4">Belongs to the AlgK family.</text>
</comment>
<name>ALGK_AZOVI</name>
<gene>
    <name type="primary">algK</name>
</gene>
<feature type="signal peptide" evidence="2">
    <location>
        <begin position="1"/>
        <end position="17"/>
    </location>
</feature>
<feature type="chain" id="PRO_0000020666" description="Alginate biosynthesis protein AlgK">
    <location>
        <begin position="18"/>
        <end position="460"/>
    </location>
</feature>
<feature type="lipid moiety-binding region" description="N-palmitoyl cysteine" evidence="2">
    <location>
        <position position="18"/>
    </location>
</feature>
<feature type="lipid moiety-binding region" description="S-diacylglycerol cysteine" evidence="2">
    <location>
        <position position="18"/>
    </location>
</feature>
<evidence type="ECO:0000250" key="1"/>
<evidence type="ECO:0000255" key="2">
    <source>
        <dbReference type="PROSITE-ProRule" id="PRU00303"/>
    </source>
</evidence>
<evidence type="ECO:0000269" key="3">
    <source>
    </source>
</evidence>
<evidence type="ECO:0000305" key="4"/>